<proteinExistence type="inferred from homology"/>
<protein>
    <recommendedName>
        <fullName>Coat protein</fullName>
    </recommendedName>
    <alternativeName>
        <fullName>Capsid protein</fullName>
        <shortName>CP</shortName>
    </alternativeName>
</protein>
<comment type="function">
    <text>Required for genome encapsidation. Forms ribonucleoprotein complexes along with TGB1 helicase and viral RNA.</text>
</comment>
<comment type="subcellular location">
    <subcellularLocation>
        <location evidence="2">Virion</location>
    </subcellularLocation>
</comment>
<comment type="similarity">
    <text evidence="2">Belongs to the potexvirus capsid protein family.</text>
</comment>
<dbReference type="EMBL" id="D13747">
    <property type="protein sequence ID" value="BAA02895.1"/>
    <property type="molecule type" value="Genomic_RNA"/>
</dbReference>
<dbReference type="PIR" id="JT0474">
    <property type="entry name" value="VCWGN4"/>
</dbReference>
<dbReference type="RefSeq" id="NP_040782.1">
    <property type="nucleotide sequence ID" value="NC_001441.1"/>
</dbReference>
<dbReference type="SMR" id="P15100"/>
<dbReference type="GeneID" id="1494019"/>
<dbReference type="KEGG" id="vg:1494019"/>
<dbReference type="OrthoDB" id="15901at10239"/>
<dbReference type="Proteomes" id="UP000008865">
    <property type="component" value="Genome"/>
</dbReference>
<dbReference type="GO" id="GO:0019029">
    <property type="term" value="C:helical viral capsid"/>
    <property type="evidence" value="ECO:0007669"/>
    <property type="project" value="UniProtKB-KW"/>
</dbReference>
<dbReference type="GO" id="GO:1990904">
    <property type="term" value="C:ribonucleoprotein complex"/>
    <property type="evidence" value="ECO:0007669"/>
    <property type="project" value="UniProtKB-KW"/>
</dbReference>
<dbReference type="GO" id="GO:0005198">
    <property type="term" value="F:structural molecule activity"/>
    <property type="evidence" value="ECO:0007669"/>
    <property type="project" value="InterPro"/>
</dbReference>
<dbReference type="InterPro" id="IPR000052">
    <property type="entry name" value="Pltvir_coat"/>
</dbReference>
<dbReference type="Pfam" id="PF00286">
    <property type="entry name" value="Flexi_CP"/>
    <property type="match status" value="1"/>
</dbReference>
<dbReference type="PRINTS" id="PR00232">
    <property type="entry name" value="POTXCARLCOAT"/>
</dbReference>
<dbReference type="PROSITE" id="PS00418">
    <property type="entry name" value="POTEX_CARLAVIRUS_COAT"/>
    <property type="match status" value="1"/>
</dbReference>
<keyword id="KW-0167">Capsid protein</keyword>
<keyword id="KW-1139">Helical capsid protein</keyword>
<keyword id="KW-1185">Reference proteome</keyword>
<keyword id="KW-0687">Ribonucleoprotein</keyword>
<keyword id="KW-0946">Virion</keyword>
<evidence type="ECO:0000256" key="1">
    <source>
        <dbReference type="SAM" id="MobiDB-lite"/>
    </source>
</evidence>
<evidence type="ECO:0000305" key="2"/>
<sequence length="240" mass="26097">MATPSTQTTDPKPANADLSDPNRAPSLEDLKKIKYESTTTAVATPAEIQLLGDLFKKLGLDANSVAPAMWDLARAYADVQASRSAVLSGTTPSNPAITRQALARQFYVINITPRQFCMYFAKVVWNLLLDSNVPPAGWAKQGLPDDCKFAGFDFFEGVLSPAALDPADGLIRPPSQREIQAHSTAKYGALARQRYRMETSFPPWLKSLTVGSAVSTPCTPLKHLQNCNRNTSKLKLVCGL</sequence>
<organismHost>
    <name type="scientific">Narcissus pseudonarcissus</name>
    <name type="common">Daffodil</name>
    <dbReference type="NCBI Taxonomy" id="39639"/>
</organismHost>
<organism>
    <name type="scientific">Narcissus mosaic virus</name>
    <name type="common">NMV</name>
    <dbReference type="NCBI Taxonomy" id="12180"/>
    <lineage>
        <taxon>Viruses</taxon>
        <taxon>Riboviria</taxon>
        <taxon>Orthornavirae</taxon>
        <taxon>Kitrinoviricota</taxon>
        <taxon>Alsuviricetes</taxon>
        <taxon>Tymovirales</taxon>
        <taxon>Alphaflexiviridae</taxon>
        <taxon>Potexvirus</taxon>
    </lineage>
</organism>
<name>CAPSD_NMV</name>
<feature type="chain" id="PRO_0000222622" description="Coat protein">
    <location>
        <begin position="1"/>
        <end position="240"/>
    </location>
</feature>
<feature type="region of interest" description="Disordered" evidence="1">
    <location>
        <begin position="1"/>
        <end position="27"/>
    </location>
</feature>
<feature type="compositionally biased region" description="Polar residues" evidence="1">
    <location>
        <begin position="1"/>
        <end position="10"/>
    </location>
</feature>
<reference key="1">
    <citation type="journal article" date="1989" name="J. Gen. Virol.">
        <title>Nucleotide sequence of narcissus mosaic virus RNA.</title>
        <authorList>
            <person name="Zuidema D."/>
            <person name="Linthorst H.J.M."/>
            <person name="Huisman M.J."/>
            <person name="Asjes C.J."/>
            <person name="Bol J.F."/>
        </authorList>
    </citation>
    <scope>NUCLEOTIDE SEQUENCE [GENOMIC RNA]</scope>
</reference>
<reference key="2">
    <citation type="journal article" date="2005" name="Mol. Plant Microbe Interact.">
        <title>A new cell-to-cell transport model for Potexviruses.</title>
        <authorList>
            <person name="Verchot-Lubicz J."/>
        </authorList>
    </citation>
    <scope>REVIEW</scope>
</reference>
<accession>P15100</accession>